<proteinExistence type="inferred from homology"/>
<name>RS14_BACVZ</name>
<accession>A7Z2Q4</accession>
<reference key="1">
    <citation type="journal article" date="2007" name="Nat. Biotechnol.">
        <title>Comparative analysis of the complete genome sequence of the plant growth-promoting bacterium Bacillus amyloliquefaciens FZB42.</title>
        <authorList>
            <person name="Chen X.H."/>
            <person name="Koumoutsi A."/>
            <person name="Scholz R."/>
            <person name="Eisenreich A."/>
            <person name="Schneider K."/>
            <person name="Heinemeyer I."/>
            <person name="Morgenstern B."/>
            <person name="Voss B."/>
            <person name="Hess W.R."/>
            <person name="Reva O."/>
            <person name="Junge H."/>
            <person name="Voigt B."/>
            <person name="Jungblut P.R."/>
            <person name="Vater J."/>
            <person name="Suessmuth R."/>
            <person name="Liesegang H."/>
            <person name="Strittmatter A."/>
            <person name="Gottschalk G."/>
            <person name="Borriss R."/>
        </authorList>
    </citation>
    <scope>NUCLEOTIDE SEQUENCE [LARGE SCALE GENOMIC DNA]</scope>
    <source>
        <strain>DSM 23117 / BGSC 10A6 / LMG 26770 / FZB42</strain>
    </source>
</reference>
<feature type="chain" id="PRO_1000128301" description="Small ribosomal subunit protein uS14A">
    <location>
        <begin position="1"/>
        <end position="89"/>
    </location>
</feature>
<protein>
    <recommendedName>
        <fullName evidence="1">Small ribosomal subunit protein uS14A</fullName>
    </recommendedName>
    <alternativeName>
        <fullName evidence="2">30S ribosomal protein S14</fullName>
    </alternativeName>
</protein>
<sequence length="89" mass="10386">MAKKSKVIKELKRQKLVEQYADIRRELKAKGDWEALSKLPRDSAPARLHNRCTVTGRPRGYMRKFKLSRIAFRELAHKGRIPGVKKASW</sequence>
<gene>
    <name evidence="1" type="primary">rpsN</name>
    <name type="ordered locus">RBAM_009150</name>
</gene>
<comment type="function">
    <text evidence="1">Binds 16S rRNA, required for the assembly of 30S particles and may also be responsible for determining the conformation of the 16S rRNA at the A site.</text>
</comment>
<comment type="subunit">
    <text evidence="1">Part of the 30S ribosomal subunit. Contacts proteins S3 and S10.</text>
</comment>
<comment type="similarity">
    <text evidence="1">Belongs to the universal ribosomal protein uS14 family.</text>
</comment>
<dbReference type="EMBL" id="CP000560">
    <property type="protein sequence ID" value="ABS73280.1"/>
    <property type="molecule type" value="Genomic_DNA"/>
</dbReference>
<dbReference type="RefSeq" id="WP_007610245.1">
    <property type="nucleotide sequence ID" value="NC_009725.2"/>
</dbReference>
<dbReference type="SMR" id="A7Z2Q4"/>
<dbReference type="GeneID" id="93080049"/>
<dbReference type="KEGG" id="bay:RBAM_009150"/>
<dbReference type="HOGENOM" id="CLU_139869_0_0_9"/>
<dbReference type="Proteomes" id="UP000001120">
    <property type="component" value="Chromosome"/>
</dbReference>
<dbReference type="GO" id="GO:0005737">
    <property type="term" value="C:cytoplasm"/>
    <property type="evidence" value="ECO:0007669"/>
    <property type="project" value="UniProtKB-ARBA"/>
</dbReference>
<dbReference type="GO" id="GO:0015935">
    <property type="term" value="C:small ribosomal subunit"/>
    <property type="evidence" value="ECO:0007669"/>
    <property type="project" value="TreeGrafter"/>
</dbReference>
<dbReference type="GO" id="GO:0019843">
    <property type="term" value="F:rRNA binding"/>
    <property type="evidence" value="ECO:0007669"/>
    <property type="project" value="UniProtKB-UniRule"/>
</dbReference>
<dbReference type="GO" id="GO:0003735">
    <property type="term" value="F:structural constituent of ribosome"/>
    <property type="evidence" value="ECO:0007669"/>
    <property type="project" value="InterPro"/>
</dbReference>
<dbReference type="GO" id="GO:0006412">
    <property type="term" value="P:translation"/>
    <property type="evidence" value="ECO:0007669"/>
    <property type="project" value="UniProtKB-UniRule"/>
</dbReference>
<dbReference type="FunFam" id="4.10.830.10:FF:000003">
    <property type="entry name" value="30S ribosomal protein S14"/>
    <property type="match status" value="1"/>
</dbReference>
<dbReference type="Gene3D" id="4.10.830.10">
    <property type="entry name" value="30s Ribosomal Protein S14, Chain N"/>
    <property type="match status" value="1"/>
</dbReference>
<dbReference type="HAMAP" id="MF_00537">
    <property type="entry name" value="Ribosomal_uS14_1"/>
    <property type="match status" value="1"/>
</dbReference>
<dbReference type="InterPro" id="IPR001209">
    <property type="entry name" value="Ribosomal_uS14"/>
</dbReference>
<dbReference type="InterPro" id="IPR023036">
    <property type="entry name" value="Ribosomal_uS14_bac/plastid"/>
</dbReference>
<dbReference type="InterPro" id="IPR018271">
    <property type="entry name" value="Ribosomal_uS14_CS"/>
</dbReference>
<dbReference type="InterPro" id="IPR043140">
    <property type="entry name" value="Ribosomal_uS14_sf"/>
</dbReference>
<dbReference type="NCBIfam" id="NF006477">
    <property type="entry name" value="PRK08881.1"/>
    <property type="match status" value="1"/>
</dbReference>
<dbReference type="PANTHER" id="PTHR19836">
    <property type="entry name" value="30S RIBOSOMAL PROTEIN S14"/>
    <property type="match status" value="1"/>
</dbReference>
<dbReference type="PANTHER" id="PTHR19836:SF19">
    <property type="entry name" value="SMALL RIBOSOMAL SUBUNIT PROTEIN US14M"/>
    <property type="match status" value="1"/>
</dbReference>
<dbReference type="Pfam" id="PF00253">
    <property type="entry name" value="Ribosomal_S14"/>
    <property type="match status" value="1"/>
</dbReference>
<dbReference type="SUPFAM" id="SSF57716">
    <property type="entry name" value="Glucocorticoid receptor-like (DNA-binding domain)"/>
    <property type="match status" value="1"/>
</dbReference>
<dbReference type="PROSITE" id="PS00527">
    <property type="entry name" value="RIBOSOMAL_S14"/>
    <property type="match status" value="1"/>
</dbReference>
<keyword id="KW-0687">Ribonucleoprotein</keyword>
<keyword id="KW-0689">Ribosomal protein</keyword>
<keyword id="KW-0694">RNA-binding</keyword>
<keyword id="KW-0699">rRNA-binding</keyword>
<organism>
    <name type="scientific">Bacillus velezensis (strain DSM 23117 / BGSC 10A6 / LMG 26770 / FZB42)</name>
    <name type="common">Bacillus amyloliquefaciens subsp. plantarum</name>
    <dbReference type="NCBI Taxonomy" id="326423"/>
    <lineage>
        <taxon>Bacteria</taxon>
        <taxon>Bacillati</taxon>
        <taxon>Bacillota</taxon>
        <taxon>Bacilli</taxon>
        <taxon>Bacillales</taxon>
        <taxon>Bacillaceae</taxon>
        <taxon>Bacillus</taxon>
        <taxon>Bacillus amyloliquefaciens group</taxon>
    </lineage>
</organism>
<evidence type="ECO:0000255" key="1">
    <source>
        <dbReference type="HAMAP-Rule" id="MF_00537"/>
    </source>
</evidence>
<evidence type="ECO:0000305" key="2"/>